<accession>Q9Y2D0</accession>
<accession>A8K4T5</accession>
<dbReference type="EC" id="4.2.1.1"/>
<dbReference type="EMBL" id="AB021660">
    <property type="protein sequence ID" value="BAA76671.1"/>
    <property type="molecule type" value="mRNA"/>
</dbReference>
<dbReference type="EMBL" id="AK291050">
    <property type="protein sequence ID" value="BAF83739.1"/>
    <property type="molecule type" value="mRNA"/>
</dbReference>
<dbReference type="EMBL" id="CH471074">
    <property type="protein sequence ID" value="EAW98897.1"/>
    <property type="molecule type" value="Genomic_DNA"/>
</dbReference>
<dbReference type="EMBL" id="BC028142">
    <property type="protein sequence ID" value="AAH28142.1"/>
    <property type="molecule type" value="mRNA"/>
</dbReference>
<dbReference type="CCDS" id="CCDS14171.1"/>
<dbReference type="RefSeq" id="NP_009151.1">
    <property type="nucleotide sequence ID" value="NM_007220.4"/>
</dbReference>
<dbReference type="RefSeq" id="XP_005274499.1">
    <property type="nucleotide sequence ID" value="XM_005274442.4"/>
</dbReference>
<dbReference type="SMR" id="Q9Y2D0"/>
<dbReference type="BioGRID" id="116403">
    <property type="interactions" value="7"/>
</dbReference>
<dbReference type="FunCoup" id="Q9Y2D0">
    <property type="interactions" value="985"/>
</dbReference>
<dbReference type="IntAct" id="Q9Y2D0">
    <property type="interactions" value="2"/>
</dbReference>
<dbReference type="STRING" id="9606.ENSP00000314099"/>
<dbReference type="BindingDB" id="Q9Y2D0"/>
<dbReference type="ChEMBL" id="CHEMBL3969"/>
<dbReference type="DrugBank" id="DB00562">
    <property type="generic name" value="Benzthiazide"/>
</dbReference>
<dbReference type="DrugBank" id="DB00606">
    <property type="generic name" value="Cyclothiazide"/>
</dbReference>
<dbReference type="DrugBank" id="DB08846">
    <property type="generic name" value="Ellagic acid"/>
</dbReference>
<dbReference type="DrugBank" id="DB00909">
    <property type="generic name" value="Zonisamide"/>
</dbReference>
<dbReference type="DrugCentral" id="Q9Y2D0"/>
<dbReference type="GlyCosmos" id="Q9Y2D0">
    <property type="glycosylation" value="1 site, 1 glycan"/>
</dbReference>
<dbReference type="GlyGen" id="Q9Y2D0">
    <property type="glycosylation" value="1 site, 1 N-linked glycan (1 site)"/>
</dbReference>
<dbReference type="iPTMnet" id="Q9Y2D0"/>
<dbReference type="PhosphoSitePlus" id="Q9Y2D0"/>
<dbReference type="BioMuta" id="CA5B"/>
<dbReference type="DMDM" id="8928041"/>
<dbReference type="jPOST" id="Q9Y2D0"/>
<dbReference type="MassIVE" id="Q9Y2D0"/>
<dbReference type="PaxDb" id="9606-ENSP00000314099"/>
<dbReference type="PeptideAtlas" id="Q9Y2D0"/>
<dbReference type="ProteomicsDB" id="85732"/>
<dbReference type="Antibodypedia" id="541">
    <property type="antibodies" value="259 antibodies from 34 providers"/>
</dbReference>
<dbReference type="DNASU" id="11238"/>
<dbReference type="Ensembl" id="ENST00000318636.8">
    <property type="protein sequence ID" value="ENSP00000314099.3"/>
    <property type="gene ID" value="ENSG00000169239.14"/>
</dbReference>
<dbReference type="GeneID" id="11238"/>
<dbReference type="KEGG" id="hsa:11238"/>
<dbReference type="MANE-Select" id="ENST00000318636.8">
    <property type="protein sequence ID" value="ENSP00000314099.3"/>
    <property type="RefSeq nucleotide sequence ID" value="NM_007220.4"/>
    <property type="RefSeq protein sequence ID" value="NP_009151.1"/>
</dbReference>
<dbReference type="UCSC" id="uc004cxe.4">
    <property type="organism name" value="human"/>
</dbReference>
<dbReference type="AGR" id="HGNC:1378"/>
<dbReference type="CTD" id="11238"/>
<dbReference type="DisGeNET" id="11238"/>
<dbReference type="GeneCards" id="CA5B"/>
<dbReference type="HGNC" id="HGNC:1378">
    <property type="gene designation" value="CA5B"/>
</dbReference>
<dbReference type="HPA" id="ENSG00000169239">
    <property type="expression patterns" value="Low tissue specificity"/>
</dbReference>
<dbReference type="MIM" id="300230">
    <property type="type" value="gene"/>
</dbReference>
<dbReference type="neXtProt" id="NX_Q9Y2D0"/>
<dbReference type="OpenTargets" id="ENSG00000169239"/>
<dbReference type="PharmGKB" id="PA25993"/>
<dbReference type="VEuPathDB" id="HostDB:ENSG00000169239"/>
<dbReference type="eggNOG" id="KOG0382">
    <property type="taxonomic scope" value="Eukaryota"/>
</dbReference>
<dbReference type="GeneTree" id="ENSGT00940000156978"/>
<dbReference type="HOGENOM" id="CLU_039326_2_1_1"/>
<dbReference type="InParanoid" id="Q9Y2D0"/>
<dbReference type="OMA" id="GESNDWG"/>
<dbReference type="OrthoDB" id="429145at2759"/>
<dbReference type="PAN-GO" id="Q9Y2D0">
    <property type="GO annotations" value="4 GO annotations based on evolutionary models"/>
</dbReference>
<dbReference type="PhylomeDB" id="Q9Y2D0"/>
<dbReference type="TreeFam" id="TF316425"/>
<dbReference type="BRENDA" id="4.2.1.1">
    <property type="organism ID" value="2681"/>
</dbReference>
<dbReference type="PathwayCommons" id="Q9Y2D0"/>
<dbReference type="Reactome" id="R-HSA-1475029">
    <property type="pathway name" value="Reversible hydration of carbon dioxide"/>
</dbReference>
<dbReference type="SignaLink" id="Q9Y2D0"/>
<dbReference type="BioGRID-ORCS" id="11238">
    <property type="hits" value="15 hits in 789 CRISPR screens"/>
</dbReference>
<dbReference type="ChiTaRS" id="CA5B">
    <property type="organism name" value="human"/>
</dbReference>
<dbReference type="GeneWiki" id="CA5B"/>
<dbReference type="GenomeRNAi" id="11238"/>
<dbReference type="Pharos" id="Q9Y2D0">
    <property type="development level" value="Tclin"/>
</dbReference>
<dbReference type="PRO" id="PR:Q9Y2D0"/>
<dbReference type="Proteomes" id="UP000005640">
    <property type="component" value="Chromosome X"/>
</dbReference>
<dbReference type="RNAct" id="Q9Y2D0">
    <property type="molecule type" value="protein"/>
</dbReference>
<dbReference type="Bgee" id="ENSG00000169239">
    <property type="expression patterns" value="Expressed in calcaneal tendon and 115 other cell types or tissues"/>
</dbReference>
<dbReference type="ExpressionAtlas" id="Q9Y2D0">
    <property type="expression patterns" value="baseline and differential"/>
</dbReference>
<dbReference type="GO" id="GO:0005737">
    <property type="term" value="C:cytoplasm"/>
    <property type="evidence" value="ECO:0000318"/>
    <property type="project" value="GO_Central"/>
</dbReference>
<dbReference type="GO" id="GO:0005759">
    <property type="term" value="C:mitochondrial matrix"/>
    <property type="evidence" value="ECO:0000304"/>
    <property type="project" value="Reactome"/>
</dbReference>
<dbReference type="GO" id="GO:0005739">
    <property type="term" value="C:mitochondrion"/>
    <property type="evidence" value="ECO:0000314"/>
    <property type="project" value="UniProtKB"/>
</dbReference>
<dbReference type="GO" id="GO:0004089">
    <property type="term" value="F:carbonate dehydratase activity"/>
    <property type="evidence" value="ECO:0000314"/>
    <property type="project" value="UniProtKB"/>
</dbReference>
<dbReference type="GO" id="GO:0008270">
    <property type="term" value="F:zinc ion binding"/>
    <property type="evidence" value="ECO:0007669"/>
    <property type="project" value="InterPro"/>
</dbReference>
<dbReference type="GO" id="GO:0009617">
    <property type="term" value="P:response to bacterium"/>
    <property type="evidence" value="ECO:0007669"/>
    <property type="project" value="Ensembl"/>
</dbReference>
<dbReference type="FunFam" id="3.10.200.10:FF:000001">
    <property type="entry name" value="Carbonic anhydrase 2"/>
    <property type="match status" value="1"/>
</dbReference>
<dbReference type="Gene3D" id="3.10.200.10">
    <property type="entry name" value="Alpha carbonic anhydrase"/>
    <property type="match status" value="1"/>
</dbReference>
<dbReference type="InterPro" id="IPR001148">
    <property type="entry name" value="CA_dom"/>
</dbReference>
<dbReference type="InterPro" id="IPR036398">
    <property type="entry name" value="CA_dom_sf"/>
</dbReference>
<dbReference type="InterPro" id="IPR023561">
    <property type="entry name" value="Carbonic_anhydrase_a-class"/>
</dbReference>
<dbReference type="InterPro" id="IPR018338">
    <property type="entry name" value="Carbonic_anhydrase_a-class_CS"/>
</dbReference>
<dbReference type="PANTHER" id="PTHR18952">
    <property type="entry name" value="CARBONIC ANHYDRASE"/>
    <property type="match status" value="1"/>
</dbReference>
<dbReference type="PANTHER" id="PTHR18952:SF25">
    <property type="entry name" value="CARBONIC ANHYDRASE 5B, MITOCHONDRIAL-RELATED"/>
    <property type="match status" value="1"/>
</dbReference>
<dbReference type="Pfam" id="PF00194">
    <property type="entry name" value="Carb_anhydrase"/>
    <property type="match status" value="1"/>
</dbReference>
<dbReference type="SMART" id="SM01057">
    <property type="entry name" value="Carb_anhydrase"/>
    <property type="match status" value="1"/>
</dbReference>
<dbReference type="SUPFAM" id="SSF51069">
    <property type="entry name" value="Carbonic anhydrase"/>
    <property type="match status" value="1"/>
</dbReference>
<dbReference type="PROSITE" id="PS00162">
    <property type="entry name" value="ALPHA_CA_1"/>
    <property type="match status" value="1"/>
</dbReference>
<dbReference type="PROSITE" id="PS51144">
    <property type="entry name" value="ALPHA_CA_2"/>
    <property type="match status" value="1"/>
</dbReference>
<protein>
    <recommendedName>
        <fullName>Carbonic anhydrase 5B, mitochondrial</fullName>
        <ecNumber>4.2.1.1</ecNumber>
    </recommendedName>
    <alternativeName>
        <fullName>Carbonate dehydratase VB</fullName>
    </alternativeName>
    <alternativeName>
        <fullName>Carbonic anhydrase VB</fullName>
        <shortName>CA-VB</shortName>
    </alternativeName>
</protein>
<feature type="transit peptide" description="Mitochondrion">
    <location>
        <begin position="1"/>
        <end position="33"/>
    </location>
</feature>
<feature type="chain" id="PRO_0000004237" description="Carbonic anhydrase 5B, mitochondrial">
    <location>
        <begin position="34"/>
        <end position="317"/>
    </location>
</feature>
<feature type="domain" description="Alpha-carbonic anhydrase" evidence="3">
    <location>
        <begin position="37"/>
        <end position="296"/>
    </location>
</feature>
<feature type="binding site" evidence="3">
    <location>
        <position position="130"/>
    </location>
    <ligand>
        <name>Zn(2+)</name>
        <dbReference type="ChEBI" id="CHEBI:29105"/>
        <note>catalytic</note>
    </ligand>
</feature>
<feature type="binding site" evidence="3">
    <location>
        <position position="132"/>
    </location>
    <ligand>
        <name>Zn(2+)</name>
        <dbReference type="ChEBI" id="CHEBI:29105"/>
        <note>catalytic</note>
    </ligand>
</feature>
<feature type="binding site" evidence="3">
    <location>
        <position position="155"/>
    </location>
    <ligand>
        <name>Zn(2+)</name>
        <dbReference type="ChEBI" id="CHEBI:29105"/>
        <note>catalytic</note>
    </ligand>
</feature>
<feature type="binding site" evidence="1">
    <location>
        <begin position="235"/>
        <end position="236"/>
    </location>
    <ligand>
        <name>substrate</name>
    </ligand>
</feature>
<name>CAH5B_HUMAN</name>
<proteinExistence type="evidence at protein level"/>
<sequence length="317" mass="36434">MVVMNSLRVILQASPGKLLWRKFQIPRFMPARPCSLYTCTYKTRNRALHPLWESVDLVPGGDRQSPINIRWRDSVYDPGLKPLTISYDPATCLHVWNNGYSFLVEFEDSTDKSVIKGGPLEHNYRLKQFHFHWGAIDAWGSEHTVDSKCFPAELHLVHWNAVRFENFEDAALEENGLAVIGVFLKLGKHHKELQKLVDTLPSIKHKDALVEFGSFDPSCLMPTCPDYWTYSGSLTTPPLSESVTWIIKKQPVEVDHDQLEQFRTLLFTSEGEKEKRMVDNFRPLQPLMNRTVRSSFRHDYVLNVQAKPKPATSQATP</sequence>
<comment type="function">
    <text evidence="4 8">Mitochondrial carbonic anhydrase that catalyzes the reversible conversion of carbon dioxide to bicarbonate/HCO3.</text>
</comment>
<comment type="catalytic activity">
    <reaction evidence="4 8">
        <text>hydrogencarbonate + H(+) = CO2 + H2O</text>
        <dbReference type="Rhea" id="RHEA:10748"/>
        <dbReference type="ChEBI" id="CHEBI:15377"/>
        <dbReference type="ChEBI" id="CHEBI:15378"/>
        <dbReference type="ChEBI" id="CHEBI:16526"/>
        <dbReference type="ChEBI" id="CHEBI:17544"/>
        <dbReference type="EC" id="4.2.1.1"/>
    </reaction>
    <physiologicalReaction direction="left-to-right" evidence="10">
        <dbReference type="Rhea" id="RHEA:10749"/>
    </physiologicalReaction>
    <physiologicalReaction direction="right-to-left" evidence="10">
        <dbReference type="Rhea" id="RHEA:10750"/>
    </physiologicalReaction>
</comment>
<comment type="cofactor">
    <cofactor evidence="2">
        <name>Zn(2+)</name>
        <dbReference type="ChEBI" id="CHEBI:29105"/>
    </cofactor>
</comment>
<comment type="activity regulation">
    <text evidence="4 5 6 7 8">Inhibited by coumarins, sulfonamide derivatives such as acetazolamide (AZA), saccharin and Foscarnet (phosphonoformate trisodium salt).</text>
</comment>
<comment type="interaction">
    <interactant intactId="EBI-21848083">
        <id>Q9Y2D0</id>
    </interactant>
    <interactant intactId="EBI-359002">
        <id>P11182</id>
        <label>DBT</label>
    </interactant>
    <organismsDiffer>false</organismsDiffer>
    <experiments>2</experiments>
</comment>
<comment type="subcellular location">
    <subcellularLocation>
        <location evidence="4">Mitochondrion</location>
    </subcellularLocation>
</comment>
<comment type="tissue specificity">
    <text evidence="4">Strongest expression in heart, pancreas, kidney, placenta, lung, and skeletal muscle. Not expressed in liver.</text>
</comment>
<comment type="similarity">
    <text evidence="9">Belongs to the alpha-carbonic anhydrase family.</text>
</comment>
<keyword id="KW-0456">Lyase</keyword>
<keyword id="KW-0479">Metal-binding</keyword>
<keyword id="KW-0496">Mitochondrion</keyword>
<keyword id="KW-1267">Proteomics identification</keyword>
<keyword id="KW-1185">Reference proteome</keyword>
<keyword id="KW-0809">Transit peptide</keyword>
<keyword id="KW-0862">Zinc</keyword>
<reference key="1">
    <citation type="journal article" date="1999" name="J. Biol. Chem.">
        <title>Human mitochondrial carbonic anhydrase VB: cDNA cloning, mRNA expression, subcellular localization, and mapping to chromosome X.</title>
        <authorList>
            <person name="Fujikawa-Adachi K."/>
            <person name="Nishimori I."/>
            <person name="Taguchi T."/>
            <person name="Onishi S."/>
        </authorList>
    </citation>
    <scope>NUCLEOTIDE SEQUENCE [MRNA]</scope>
    <scope>FUNCTION</scope>
    <scope>CATALYTIC ACTIVITY</scope>
    <scope>TISSUE SPECIFICITY</scope>
    <scope>SUBCELLULAR LOCATION</scope>
    <scope>ACTIVITY REGULATION</scope>
    <source>
        <tissue>Pancreas</tissue>
    </source>
</reference>
<reference key="2">
    <citation type="journal article" date="2004" name="Nat. Genet.">
        <title>Complete sequencing and characterization of 21,243 full-length human cDNAs.</title>
        <authorList>
            <person name="Ota T."/>
            <person name="Suzuki Y."/>
            <person name="Nishikawa T."/>
            <person name="Otsuki T."/>
            <person name="Sugiyama T."/>
            <person name="Irie R."/>
            <person name="Wakamatsu A."/>
            <person name="Hayashi K."/>
            <person name="Sato H."/>
            <person name="Nagai K."/>
            <person name="Kimura K."/>
            <person name="Makita H."/>
            <person name="Sekine M."/>
            <person name="Obayashi M."/>
            <person name="Nishi T."/>
            <person name="Shibahara T."/>
            <person name="Tanaka T."/>
            <person name="Ishii S."/>
            <person name="Yamamoto J."/>
            <person name="Saito K."/>
            <person name="Kawai Y."/>
            <person name="Isono Y."/>
            <person name="Nakamura Y."/>
            <person name="Nagahari K."/>
            <person name="Murakami K."/>
            <person name="Yasuda T."/>
            <person name="Iwayanagi T."/>
            <person name="Wagatsuma M."/>
            <person name="Shiratori A."/>
            <person name="Sudo H."/>
            <person name="Hosoiri T."/>
            <person name="Kaku Y."/>
            <person name="Kodaira H."/>
            <person name="Kondo H."/>
            <person name="Sugawara M."/>
            <person name="Takahashi M."/>
            <person name="Kanda K."/>
            <person name="Yokoi T."/>
            <person name="Furuya T."/>
            <person name="Kikkawa E."/>
            <person name="Omura Y."/>
            <person name="Abe K."/>
            <person name="Kamihara K."/>
            <person name="Katsuta N."/>
            <person name="Sato K."/>
            <person name="Tanikawa M."/>
            <person name="Yamazaki M."/>
            <person name="Ninomiya K."/>
            <person name="Ishibashi T."/>
            <person name="Yamashita H."/>
            <person name="Murakawa K."/>
            <person name="Fujimori K."/>
            <person name="Tanai H."/>
            <person name="Kimata M."/>
            <person name="Watanabe M."/>
            <person name="Hiraoka S."/>
            <person name="Chiba Y."/>
            <person name="Ishida S."/>
            <person name="Ono Y."/>
            <person name="Takiguchi S."/>
            <person name="Watanabe S."/>
            <person name="Yosida M."/>
            <person name="Hotuta T."/>
            <person name="Kusano J."/>
            <person name="Kanehori K."/>
            <person name="Takahashi-Fujii A."/>
            <person name="Hara H."/>
            <person name="Tanase T.-O."/>
            <person name="Nomura Y."/>
            <person name="Togiya S."/>
            <person name="Komai F."/>
            <person name="Hara R."/>
            <person name="Takeuchi K."/>
            <person name="Arita M."/>
            <person name="Imose N."/>
            <person name="Musashino K."/>
            <person name="Yuuki H."/>
            <person name="Oshima A."/>
            <person name="Sasaki N."/>
            <person name="Aotsuka S."/>
            <person name="Yoshikawa Y."/>
            <person name="Matsunawa H."/>
            <person name="Ichihara T."/>
            <person name="Shiohata N."/>
            <person name="Sano S."/>
            <person name="Moriya S."/>
            <person name="Momiyama H."/>
            <person name="Satoh N."/>
            <person name="Takami S."/>
            <person name="Terashima Y."/>
            <person name="Suzuki O."/>
            <person name="Nakagawa S."/>
            <person name="Senoh A."/>
            <person name="Mizoguchi H."/>
            <person name="Goto Y."/>
            <person name="Shimizu F."/>
            <person name="Wakebe H."/>
            <person name="Hishigaki H."/>
            <person name="Watanabe T."/>
            <person name="Sugiyama A."/>
            <person name="Takemoto M."/>
            <person name="Kawakami B."/>
            <person name="Yamazaki M."/>
            <person name="Watanabe K."/>
            <person name="Kumagai A."/>
            <person name="Itakura S."/>
            <person name="Fukuzumi Y."/>
            <person name="Fujimori Y."/>
            <person name="Komiyama M."/>
            <person name="Tashiro H."/>
            <person name="Tanigami A."/>
            <person name="Fujiwara T."/>
            <person name="Ono T."/>
            <person name="Yamada K."/>
            <person name="Fujii Y."/>
            <person name="Ozaki K."/>
            <person name="Hirao M."/>
            <person name="Ohmori Y."/>
            <person name="Kawabata A."/>
            <person name="Hikiji T."/>
            <person name="Kobatake N."/>
            <person name="Inagaki H."/>
            <person name="Ikema Y."/>
            <person name="Okamoto S."/>
            <person name="Okitani R."/>
            <person name="Kawakami T."/>
            <person name="Noguchi S."/>
            <person name="Itoh T."/>
            <person name="Shigeta K."/>
            <person name="Senba T."/>
            <person name="Matsumura K."/>
            <person name="Nakajima Y."/>
            <person name="Mizuno T."/>
            <person name="Morinaga M."/>
            <person name="Sasaki M."/>
            <person name="Togashi T."/>
            <person name="Oyama M."/>
            <person name="Hata H."/>
            <person name="Watanabe M."/>
            <person name="Komatsu T."/>
            <person name="Mizushima-Sugano J."/>
            <person name="Satoh T."/>
            <person name="Shirai Y."/>
            <person name="Takahashi Y."/>
            <person name="Nakagawa K."/>
            <person name="Okumura K."/>
            <person name="Nagase T."/>
            <person name="Nomura N."/>
            <person name="Kikuchi H."/>
            <person name="Masuho Y."/>
            <person name="Yamashita R."/>
            <person name="Nakai K."/>
            <person name="Yada T."/>
            <person name="Nakamura Y."/>
            <person name="Ohara O."/>
            <person name="Isogai T."/>
            <person name="Sugano S."/>
        </authorList>
    </citation>
    <scope>NUCLEOTIDE SEQUENCE [LARGE SCALE MRNA]</scope>
</reference>
<reference key="3">
    <citation type="submission" date="2005-07" db="EMBL/GenBank/DDBJ databases">
        <authorList>
            <person name="Mural R.J."/>
            <person name="Istrail S."/>
            <person name="Sutton G.G."/>
            <person name="Florea L."/>
            <person name="Halpern A.L."/>
            <person name="Mobarry C.M."/>
            <person name="Lippert R."/>
            <person name="Walenz B."/>
            <person name="Shatkay H."/>
            <person name="Dew I."/>
            <person name="Miller J.R."/>
            <person name="Flanigan M.J."/>
            <person name="Edwards N.J."/>
            <person name="Bolanos R."/>
            <person name="Fasulo D."/>
            <person name="Halldorsson B.V."/>
            <person name="Hannenhalli S."/>
            <person name="Turner R."/>
            <person name="Yooseph S."/>
            <person name="Lu F."/>
            <person name="Nusskern D.R."/>
            <person name="Shue B.C."/>
            <person name="Zheng X.H."/>
            <person name="Zhong F."/>
            <person name="Delcher A.L."/>
            <person name="Huson D.H."/>
            <person name="Kravitz S.A."/>
            <person name="Mouchard L."/>
            <person name="Reinert K."/>
            <person name="Remington K.A."/>
            <person name="Clark A.G."/>
            <person name="Waterman M.S."/>
            <person name="Eichler E.E."/>
            <person name="Adams M.D."/>
            <person name="Hunkapiller M.W."/>
            <person name="Myers E.W."/>
            <person name="Venter J.C."/>
        </authorList>
    </citation>
    <scope>NUCLEOTIDE SEQUENCE [LARGE SCALE GENOMIC DNA]</scope>
</reference>
<reference key="4">
    <citation type="journal article" date="2004" name="Genome Res.">
        <title>The status, quality, and expansion of the NIH full-length cDNA project: the Mammalian Gene Collection (MGC).</title>
        <authorList>
            <consortium name="The MGC Project Team"/>
        </authorList>
    </citation>
    <scope>NUCLEOTIDE SEQUENCE [LARGE SCALE MRNA]</scope>
    <source>
        <tissue>Blood</tissue>
    </source>
</reference>
<reference key="5">
    <citation type="journal article" date="2007" name="Angew. Chem. Int. Ed. Engl.">
        <title>Saccharin inhibits carbonic anhydrases: possible explanation for its unpleasant metallic aftertaste.</title>
        <authorList>
            <person name="Koehler K."/>
            <person name="Hillebrecht A."/>
            <person name="Schulze Wischeler J."/>
            <person name="Innocenti A."/>
            <person name="Heine A."/>
            <person name="Supuran C.T."/>
            <person name="Klebe G."/>
        </authorList>
    </citation>
    <scope>ACTIVITY REGULATION</scope>
</reference>
<reference key="6">
    <citation type="journal article" date="2007" name="Bioorg. Med. Chem. Lett.">
        <title>Phosph(on)ate as a zinc-binding group in metalloenzyme inhibitors: X-ray crystal structure of the antiviral drug foscarnet complexed to human carbonic anhydrase I.</title>
        <authorList>
            <person name="Temperini C."/>
            <person name="Innocenti A."/>
            <person name="Guerri A."/>
            <person name="Scozzafava A."/>
            <person name="Rusconi S."/>
            <person name="Supuran C.T."/>
        </authorList>
    </citation>
    <scope>ACTIVITY REGULATION</scope>
</reference>
<reference key="7">
    <citation type="journal article" date="2009" name="Bioorg. Med. Chem. Lett.">
        <title>A thiabendazole sulfonamide shows potent inhibitory activity against mammalian and nematode alpha-carbonic anhydrases.</title>
        <authorList>
            <person name="Crocetti L."/>
            <person name="Maresca A."/>
            <person name="Temperini C."/>
            <person name="Hall R.A."/>
            <person name="Scozzafava A."/>
            <person name="Muehlschlegel F.A."/>
            <person name="Supuran C.T."/>
        </authorList>
    </citation>
    <scope>ACTIVITY REGULATION</scope>
</reference>
<reference key="8">
    <citation type="journal article" date="2009" name="J. Am. Chem. Soc.">
        <title>Non-zinc mediated inhibition of carbonic anhydrases: coumarins are a new class of suicide inhibitors.</title>
        <authorList>
            <person name="Maresca A."/>
            <person name="Temperini C."/>
            <person name="Vu H."/>
            <person name="Pham N.B."/>
            <person name="Poulsen S.-A."/>
            <person name="Scozzafava A."/>
            <person name="Quinn R.J."/>
            <person name="Supuran C.T."/>
        </authorList>
    </citation>
    <scope>ACTIVITY REGULATION</scope>
    <scope>FUNCTION</scope>
    <scope>CATALYTIC ACTIVITY</scope>
</reference>
<evidence type="ECO:0000250" key="1">
    <source>
        <dbReference type="UniProtKB" id="P00918"/>
    </source>
</evidence>
<evidence type="ECO:0000250" key="2">
    <source>
        <dbReference type="UniProtKB" id="P23589"/>
    </source>
</evidence>
<evidence type="ECO:0000255" key="3">
    <source>
        <dbReference type="PROSITE-ProRule" id="PRU01134"/>
    </source>
</evidence>
<evidence type="ECO:0000269" key="4">
    <source>
    </source>
</evidence>
<evidence type="ECO:0000269" key="5">
    <source>
    </source>
</evidence>
<evidence type="ECO:0000269" key="6">
    <source>
    </source>
</evidence>
<evidence type="ECO:0000269" key="7">
    <source>
    </source>
</evidence>
<evidence type="ECO:0000269" key="8">
    <source>
    </source>
</evidence>
<evidence type="ECO:0000305" key="9"/>
<evidence type="ECO:0000305" key="10">
    <source>
    </source>
</evidence>
<organism>
    <name type="scientific">Homo sapiens</name>
    <name type="common">Human</name>
    <dbReference type="NCBI Taxonomy" id="9606"/>
    <lineage>
        <taxon>Eukaryota</taxon>
        <taxon>Metazoa</taxon>
        <taxon>Chordata</taxon>
        <taxon>Craniata</taxon>
        <taxon>Vertebrata</taxon>
        <taxon>Euteleostomi</taxon>
        <taxon>Mammalia</taxon>
        <taxon>Eutheria</taxon>
        <taxon>Euarchontoglires</taxon>
        <taxon>Primates</taxon>
        <taxon>Haplorrhini</taxon>
        <taxon>Catarrhini</taxon>
        <taxon>Hominidae</taxon>
        <taxon>Homo</taxon>
    </lineage>
</organism>
<gene>
    <name type="primary">CA5B</name>
</gene>